<proteinExistence type="inferred from homology"/>
<keyword id="KW-1003">Cell membrane</keyword>
<keyword id="KW-0249">Electron transport</keyword>
<keyword id="KW-0349">Heme</keyword>
<keyword id="KW-0408">Iron</keyword>
<keyword id="KW-0472">Membrane</keyword>
<keyword id="KW-0479">Metal-binding</keyword>
<keyword id="KW-1185">Reference proteome</keyword>
<keyword id="KW-0679">Respiratory chain</keyword>
<keyword id="KW-0732">Signal</keyword>
<keyword id="KW-0812">Transmembrane</keyword>
<keyword id="KW-1133">Transmembrane helix</keyword>
<keyword id="KW-0813">Transport</keyword>
<reference key="1">
    <citation type="journal article" date="1998" name="Photosyn. Res.">
        <title>The pet operon, encoding the prosthetic group-containing subunits of the cytochrome bc1 complex, of the purple sulfur bacterium Chromatium vinosum.</title>
        <authorList>
            <person name="Chen Y.L."/>
            <person name="Dincturk H.B."/>
            <person name="Qin H."/>
            <person name="Knaff D.B."/>
        </authorList>
    </citation>
    <scope>NUCLEOTIDE SEQUENCE [GENOMIC DNA]</scope>
</reference>
<reference key="2">
    <citation type="journal article" date="2011" name="Stand. Genomic Sci.">
        <title>Complete genome sequence of Allochromatium vinosum DSM 180(T).</title>
        <authorList>
            <person name="Weissgerber T."/>
            <person name="Zigann R."/>
            <person name="Bruce D."/>
            <person name="Chang Y.J."/>
            <person name="Detter J.C."/>
            <person name="Han C."/>
            <person name="Hauser L."/>
            <person name="Jeffries C.D."/>
            <person name="Land M."/>
            <person name="Munk A.C."/>
            <person name="Tapia R."/>
            <person name="Dahl C."/>
        </authorList>
    </citation>
    <scope>NUCLEOTIDE SEQUENCE [LARGE SCALE GENOMIC DNA]</scope>
    <source>
        <strain>ATCC 17899 / DSM 180 / NBRC 103801 / NCIMB 10441 / D</strain>
    </source>
</reference>
<gene>
    <name type="primary">petC</name>
    <name type="ordered locus">Alvin_0070</name>
</gene>
<feature type="signal peptide" evidence="1">
    <location>
        <begin position="1"/>
        <end position="19"/>
    </location>
</feature>
<feature type="chain" id="PRO_0000006559" description="Cytochrome c1">
    <location>
        <begin position="20"/>
        <end position="244"/>
    </location>
</feature>
<feature type="transmembrane region" description="Helical" evidence="1">
    <location>
        <begin position="220"/>
        <end position="240"/>
    </location>
</feature>
<feature type="binding site" description="covalent" evidence="2">
    <location>
        <position position="50"/>
    </location>
    <ligand>
        <name>heme c</name>
        <dbReference type="ChEBI" id="CHEBI:61717"/>
    </ligand>
</feature>
<feature type="binding site" description="covalent" evidence="2">
    <location>
        <position position="53"/>
    </location>
    <ligand>
        <name>heme c</name>
        <dbReference type="ChEBI" id="CHEBI:61717"/>
    </ligand>
</feature>
<feature type="binding site" description="axial binding residue" evidence="2">
    <location>
        <position position="54"/>
    </location>
    <ligand>
        <name>heme c</name>
        <dbReference type="ChEBI" id="CHEBI:61717"/>
    </ligand>
    <ligandPart>
        <name>Fe</name>
        <dbReference type="ChEBI" id="CHEBI:18248"/>
    </ligandPart>
</feature>
<protein>
    <recommendedName>
        <fullName>Cytochrome c1</fullName>
    </recommendedName>
</protein>
<name>CY1_ALLVD</name>
<accession>O31216</accession>
<accession>D3RUZ3</accession>
<comment type="function">
    <text>Component of the ubiquinol-cytochrome c reductase complex (complex III or cytochrome b-c1 complex), which is a respiratory chain that generates an electrochemical potential coupled to ATP synthesis. c1 functions as an electron donor to cytochrome c.</text>
</comment>
<comment type="subunit">
    <text>The main subunits of complex b-c1 are: cytochrome b, cytochrome c1 and the Rieske protein.</text>
</comment>
<comment type="subcellular location">
    <subcellularLocation>
        <location evidence="3">Cell membrane</location>
        <topology evidence="3">Single-pass membrane protein</topology>
    </subcellularLocation>
</comment>
<comment type="PTM">
    <text>Binds 1 heme c group covalently per subunit.</text>
</comment>
<sequence length="244" mass="27757">MRKLILATFLLLAPTALLASGGGEHLESANIDLRDQASLQRGAKYFMNYCTGCHSLQYMRYNRLAKDLGIDEIALRQNLLFGDAKPGDLITKAMTDDDALKWFGVVPPDLTLVTRWRSPDWVYTYLKSFYLDDTRPYGVNNVLFPLVGMPHVLGDLQGRQEAVMEPSHEPGGEPTIKGVKLVEEGGLSPQEYDTMVRDITNFLTYAGEPFQLERERIGRYVLLFLGFLFILAYLLKKEYWKDVH</sequence>
<organism>
    <name type="scientific">Allochromatium vinosum (strain ATCC 17899 / DSM 180 / NBRC 103801 / NCIMB 10441 / D)</name>
    <name type="common">Chromatium vinosum</name>
    <dbReference type="NCBI Taxonomy" id="572477"/>
    <lineage>
        <taxon>Bacteria</taxon>
        <taxon>Pseudomonadati</taxon>
        <taxon>Pseudomonadota</taxon>
        <taxon>Gammaproteobacteria</taxon>
        <taxon>Chromatiales</taxon>
        <taxon>Chromatiaceae</taxon>
        <taxon>Allochromatium</taxon>
    </lineage>
</organism>
<evidence type="ECO:0000255" key="1"/>
<evidence type="ECO:0000255" key="2">
    <source>
        <dbReference type="PROSITE-ProRule" id="PRU00433"/>
    </source>
</evidence>
<evidence type="ECO:0000305" key="3"/>
<dbReference type="EMBL" id="AF034104">
    <property type="protein sequence ID" value="AAB86975.1"/>
    <property type="molecule type" value="Genomic_DNA"/>
</dbReference>
<dbReference type="EMBL" id="CP001896">
    <property type="protein sequence ID" value="ADC61042.1"/>
    <property type="molecule type" value="Genomic_DNA"/>
</dbReference>
<dbReference type="RefSeq" id="WP_012969318.1">
    <property type="nucleotide sequence ID" value="NC_013851.1"/>
</dbReference>
<dbReference type="SMR" id="O31216"/>
<dbReference type="STRING" id="572477.Alvin_0070"/>
<dbReference type="KEGG" id="alv:Alvin_0070"/>
<dbReference type="eggNOG" id="COG2857">
    <property type="taxonomic scope" value="Bacteria"/>
</dbReference>
<dbReference type="HOGENOM" id="CLU_078597_0_0_6"/>
<dbReference type="OrthoDB" id="9798864at2"/>
<dbReference type="Proteomes" id="UP000001441">
    <property type="component" value="Chromosome"/>
</dbReference>
<dbReference type="GO" id="GO:0005886">
    <property type="term" value="C:plasma membrane"/>
    <property type="evidence" value="ECO:0007669"/>
    <property type="project" value="UniProtKB-SubCell"/>
</dbReference>
<dbReference type="GO" id="GO:0009055">
    <property type="term" value="F:electron transfer activity"/>
    <property type="evidence" value="ECO:0007669"/>
    <property type="project" value="InterPro"/>
</dbReference>
<dbReference type="GO" id="GO:0020037">
    <property type="term" value="F:heme binding"/>
    <property type="evidence" value="ECO:0007669"/>
    <property type="project" value="InterPro"/>
</dbReference>
<dbReference type="GO" id="GO:0046872">
    <property type="term" value="F:metal ion binding"/>
    <property type="evidence" value="ECO:0007669"/>
    <property type="project" value="UniProtKB-KW"/>
</dbReference>
<dbReference type="Gene3D" id="1.10.760.10">
    <property type="entry name" value="Cytochrome c-like domain"/>
    <property type="match status" value="1"/>
</dbReference>
<dbReference type="InterPro" id="IPR009056">
    <property type="entry name" value="Cyt_c-like_dom"/>
</dbReference>
<dbReference type="InterPro" id="IPR036909">
    <property type="entry name" value="Cyt_c-like_dom_sf"/>
</dbReference>
<dbReference type="InterPro" id="IPR002326">
    <property type="entry name" value="Cyt_c1"/>
</dbReference>
<dbReference type="PANTHER" id="PTHR10266">
    <property type="entry name" value="CYTOCHROME C1"/>
    <property type="match status" value="1"/>
</dbReference>
<dbReference type="PANTHER" id="PTHR10266:SF3">
    <property type="entry name" value="CYTOCHROME C1, HEME PROTEIN, MITOCHONDRIAL"/>
    <property type="match status" value="1"/>
</dbReference>
<dbReference type="Pfam" id="PF02167">
    <property type="entry name" value="Cytochrom_C1"/>
    <property type="match status" value="2"/>
</dbReference>
<dbReference type="PRINTS" id="PR00603">
    <property type="entry name" value="CYTOCHROMEC1"/>
</dbReference>
<dbReference type="SUPFAM" id="SSF46626">
    <property type="entry name" value="Cytochrome c"/>
    <property type="match status" value="1"/>
</dbReference>
<dbReference type="PROSITE" id="PS51007">
    <property type="entry name" value="CYTC"/>
    <property type="match status" value="1"/>
</dbReference>